<sequence length="311" mass="35328">MFIVTGGAGFIGSSIVKSLNERGITDILVVDDLTDGAKFVNLVDLQIMDYMDKDEFITQIVSGQDFGDIEAIFHEGACSATTEWNGKFMMENNYEYSKDLLHYCIERDIPFLYASSAATYGGNDTFKEELKYEKPLNVYGYSKFQFDQYVRRIWEDAAAHDETLPQIVGFRYFNVYGPREQHKGSMASVAFHLNNQLNAGENAKLFEGEHKRDFVYIGDVCKVNLWFFDNNVSGIYNLGTGQAESFLEVGQAVVAYHQKGEVERIPFPEHLKGRYQSFTEADLTNLRAAGYKDTFKSVAQGTAEYMAWLNR</sequence>
<gene>
    <name evidence="1" type="primary">hldD</name>
    <name type="ordered locus">Ping_0335</name>
</gene>
<proteinExistence type="inferred from homology"/>
<accession>A1SRT6</accession>
<keyword id="KW-0119">Carbohydrate metabolism</keyword>
<keyword id="KW-0413">Isomerase</keyword>
<keyword id="KW-0521">NADP</keyword>
<keyword id="KW-1185">Reference proteome</keyword>
<name>HLDD_PSYIN</name>
<evidence type="ECO:0000255" key="1">
    <source>
        <dbReference type="HAMAP-Rule" id="MF_01601"/>
    </source>
</evidence>
<comment type="function">
    <text evidence="1">Catalyzes the interconversion between ADP-D-glycero-beta-D-manno-heptose and ADP-L-glycero-beta-D-manno-heptose via an epimerization at carbon 6 of the heptose.</text>
</comment>
<comment type="catalytic activity">
    <reaction evidence="1">
        <text>ADP-D-glycero-beta-D-manno-heptose = ADP-L-glycero-beta-D-manno-heptose</text>
        <dbReference type="Rhea" id="RHEA:17577"/>
        <dbReference type="ChEBI" id="CHEBI:59967"/>
        <dbReference type="ChEBI" id="CHEBI:61506"/>
        <dbReference type="EC" id="5.1.3.20"/>
    </reaction>
</comment>
<comment type="cofactor">
    <cofactor evidence="1">
        <name>NADP(+)</name>
        <dbReference type="ChEBI" id="CHEBI:58349"/>
    </cofactor>
    <text evidence="1">Binds 1 NADP(+) per subunit.</text>
</comment>
<comment type="pathway">
    <text evidence="1">Nucleotide-sugar biosynthesis; ADP-L-glycero-beta-D-manno-heptose biosynthesis; ADP-L-glycero-beta-D-manno-heptose from D-glycero-beta-D-manno-heptose 7-phosphate: step 4/4.</text>
</comment>
<comment type="subunit">
    <text evidence="1">Homopentamer.</text>
</comment>
<comment type="domain">
    <text evidence="1">Contains a large N-terminal NADP-binding domain, and a smaller C-terminal substrate-binding domain.</text>
</comment>
<comment type="similarity">
    <text evidence="1">Belongs to the NAD(P)-dependent epimerase/dehydratase family. HldD subfamily.</text>
</comment>
<organism>
    <name type="scientific">Psychromonas ingrahamii (strain DSM 17664 / CCUG 51855 / 37)</name>
    <dbReference type="NCBI Taxonomy" id="357804"/>
    <lineage>
        <taxon>Bacteria</taxon>
        <taxon>Pseudomonadati</taxon>
        <taxon>Pseudomonadota</taxon>
        <taxon>Gammaproteobacteria</taxon>
        <taxon>Alteromonadales</taxon>
        <taxon>Psychromonadaceae</taxon>
        <taxon>Psychromonas</taxon>
    </lineage>
</organism>
<feature type="chain" id="PRO_1000069364" description="ADP-L-glycero-D-manno-heptose-6-epimerase">
    <location>
        <begin position="1"/>
        <end position="311"/>
    </location>
</feature>
<feature type="active site" description="Proton acceptor" evidence="1">
    <location>
        <position position="139"/>
    </location>
</feature>
<feature type="active site" description="Proton acceptor" evidence="1">
    <location>
        <position position="183"/>
    </location>
</feature>
<feature type="binding site" evidence="1">
    <location>
        <begin position="10"/>
        <end position="11"/>
    </location>
    <ligand>
        <name>NADP(+)</name>
        <dbReference type="ChEBI" id="CHEBI:58349"/>
    </ligand>
</feature>
<feature type="binding site" evidence="1">
    <location>
        <begin position="31"/>
        <end position="32"/>
    </location>
    <ligand>
        <name>NADP(+)</name>
        <dbReference type="ChEBI" id="CHEBI:58349"/>
    </ligand>
</feature>
<feature type="binding site" evidence="1">
    <location>
        <position position="38"/>
    </location>
    <ligand>
        <name>NADP(+)</name>
        <dbReference type="ChEBI" id="CHEBI:58349"/>
    </ligand>
</feature>
<feature type="binding site" evidence="1">
    <location>
        <position position="53"/>
    </location>
    <ligand>
        <name>NADP(+)</name>
        <dbReference type="ChEBI" id="CHEBI:58349"/>
    </ligand>
</feature>
<feature type="binding site" evidence="1">
    <location>
        <begin position="75"/>
        <end position="79"/>
    </location>
    <ligand>
        <name>NADP(+)</name>
        <dbReference type="ChEBI" id="CHEBI:58349"/>
    </ligand>
</feature>
<feature type="binding site" evidence="1">
    <location>
        <position position="92"/>
    </location>
    <ligand>
        <name>NADP(+)</name>
        <dbReference type="ChEBI" id="CHEBI:58349"/>
    </ligand>
</feature>
<feature type="binding site" evidence="1">
    <location>
        <position position="143"/>
    </location>
    <ligand>
        <name>NADP(+)</name>
        <dbReference type="ChEBI" id="CHEBI:58349"/>
    </ligand>
</feature>
<feature type="binding site" evidence="1">
    <location>
        <position position="174"/>
    </location>
    <ligand>
        <name>substrate</name>
    </ligand>
</feature>
<feature type="binding site" evidence="1">
    <location>
        <position position="175"/>
    </location>
    <ligand>
        <name>NADP(+)</name>
        <dbReference type="ChEBI" id="CHEBI:58349"/>
    </ligand>
</feature>
<feature type="binding site" evidence="1">
    <location>
        <position position="183"/>
    </location>
    <ligand>
        <name>NADP(+)</name>
        <dbReference type="ChEBI" id="CHEBI:58349"/>
    </ligand>
</feature>
<feature type="binding site" evidence="1">
    <location>
        <position position="185"/>
    </location>
    <ligand>
        <name>substrate</name>
    </ligand>
</feature>
<feature type="binding site" evidence="1">
    <location>
        <position position="192"/>
    </location>
    <ligand>
        <name>substrate</name>
    </ligand>
</feature>
<feature type="binding site" evidence="1">
    <location>
        <begin position="206"/>
        <end position="209"/>
    </location>
    <ligand>
        <name>substrate</name>
    </ligand>
</feature>
<feature type="binding site" evidence="1">
    <location>
        <position position="212"/>
    </location>
    <ligand>
        <name>substrate</name>
    </ligand>
</feature>
<feature type="binding site" evidence="1">
    <location>
        <position position="275"/>
    </location>
    <ligand>
        <name>substrate</name>
    </ligand>
</feature>
<dbReference type="EC" id="5.1.3.20" evidence="1"/>
<dbReference type="EMBL" id="CP000510">
    <property type="protein sequence ID" value="ABM02201.1"/>
    <property type="molecule type" value="Genomic_DNA"/>
</dbReference>
<dbReference type="RefSeq" id="WP_011768760.1">
    <property type="nucleotide sequence ID" value="NC_008709.1"/>
</dbReference>
<dbReference type="SMR" id="A1SRT6"/>
<dbReference type="STRING" id="357804.Ping_0335"/>
<dbReference type="KEGG" id="pin:Ping_0335"/>
<dbReference type="eggNOG" id="COG0451">
    <property type="taxonomic scope" value="Bacteria"/>
</dbReference>
<dbReference type="HOGENOM" id="CLU_007383_1_3_6"/>
<dbReference type="OrthoDB" id="9803010at2"/>
<dbReference type="UniPathway" id="UPA00356">
    <property type="reaction ID" value="UER00440"/>
</dbReference>
<dbReference type="Proteomes" id="UP000000639">
    <property type="component" value="Chromosome"/>
</dbReference>
<dbReference type="GO" id="GO:0008712">
    <property type="term" value="F:ADP-glyceromanno-heptose 6-epimerase activity"/>
    <property type="evidence" value="ECO:0007669"/>
    <property type="project" value="UniProtKB-UniRule"/>
</dbReference>
<dbReference type="GO" id="GO:0050661">
    <property type="term" value="F:NADP binding"/>
    <property type="evidence" value="ECO:0007669"/>
    <property type="project" value="InterPro"/>
</dbReference>
<dbReference type="GO" id="GO:0097171">
    <property type="term" value="P:ADP-L-glycero-beta-D-manno-heptose biosynthetic process"/>
    <property type="evidence" value="ECO:0007669"/>
    <property type="project" value="UniProtKB-UniPathway"/>
</dbReference>
<dbReference type="GO" id="GO:0005975">
    <property type="term" value="P:carbohydrate metabolic process"/>
    <property type="evidence" value="ECO:0007669"/>
    <property type="project" value="UniProtKB-UniRule"/>
</dbReference>
<dbReference type="CDD" id="cd05248">
    <property type="entry name" value="ADP_GME_SDR_e"/>
    <property type="match status" value="1"/>
</dbReference>
<dbReference type="Gene3D" id="3.40.50.720">
    <property type="entry name" value="NAD(P)-binding Rossmann-like Domain"/>
    <property type="match status" value="1"/>
</dbReference>
<dbReference type="Gene3D" id="3.90.25.10">
    <property type="entry name" value="UDP-galactose 4-epimerase, domain 1"/>
    <property type="match status" value="1"/>
</dbReference>
<dbReference type="HAMAP" id="MF_01601">
    <property type="entry name" value="Heptose_epimerase"/>
    <property type="match status" value="1"/>
</dbReference>
<dbReference type="InterPro" id="IPR001509">
    <property type="entry name" value="Epimerase_deHydtase"/>
</dbReference>
<dbReference type="InterPro" id="IPR011912">
    <property type="entry name" value="Heptose_epim"/>
</dbReference>
<dbReference type="InterPro" id="IPR036291">
    <property type="entry name" value="NAD(P)-bd_dom_sf"/>
</dbReference>
<dbReference type="NCBIfam" id="TIGR02197">
    <property type="entry name" value="heptose_epim"/>
    <property type="match status" value="1"/>
</dbReference>
<dbReference type="NCBIfam" id="NF008360">
    <property type="entry name" value="PRK11150.1"/>
    <property type="match status" value="1"/>
</dbReference>
<dbReference type="PANTHER" id="PTHR43103:SF3">
    <property type="entry name" value="ADP-L-GLYCERO-D-MANNO-HEPTOSE-6-EPIMERASE"/>
    <property type="match status" value="1"/>
</dbReference>
<dbReference type="PANTHER" id="PTHR43103">
    <property type="entry name" value="NUCLEOSIDE-DIPHOSPHATE-SUGAR EPIMERASE"/>
    <property type="match status" value="1"/>
</dbReference>
<dbReference type="Pfam" id="PF01370">
    <property type="entry name" value="Epimerase"/>
    <property type="match status" value="1"/>
</dbReference>
<dbReference type="SUPFAM" id="SSF51735">
    <property type="entry name" value="NAD(P)-binding Rossmann-fold domains"/>
    <property type="match status" value="1"/>
</dbReference>
<reference key="1">
    <citation type="journal article" date="2008" name="BMC Genomics">
        <title>Genomics of an extreme psychrophile, Psychromonas ingrahamii.</title>
        <authorList>
            <person name="Riley M."/>
            <person name="Staley J.T."/>
            <person name="Danchin A."/>
            <person name="Wang T.Z."/>
            <person name="Brettin T.S."/>
            <person name="Hauser L.J."/>
            <person name="Land M.L."/>
            <person name="Thompson L.S."/>
        </authorList>
    </citation>
    <scope>NUCLEOTIDE SEQUENCE [LARGE SCALE GENOMIC DNA]</scope>
    <source>
        <strain>DSM 17664 / CCUG 51855 / 37</strain>
    </source>
</reference>
<protein>
    <recommendedName>
        <fullName evidence="1">ADP-L-glycero-D-manno-heptose-6-epimerase</fullName>
        <ecNumber evidence="1">5.1.3.20</ecNumber>
    </recommendedName>
    <alternativeName>
        <fullName evidence="1">ADP-L-glycero-beta-D-manno-heptose-6-epimerase</fullName>
        <shortName evidence="1">ADP-glyceromanno-heptose 6-epimerase</shortName>
        <shortName evidence="1">ADP-hep 6-epimerase</shortName>
        <shortName evidence="1">AGME</shortName>
    </alternativeName>
</protein>